<feature type="signal peptide" evidence="1">
    <location>
        <begin position="1"/>
        <end position="22"/>
    </location>
</feature>
<feature type="chain" id="PRO_0000284080" description="Putative binding protein BAB2_1146">
    <location>
        <begin position="23"/>
        <end position="319"/>
    </location>
</feature>
<protein>
    <recommendedName>
        <fullName>Putative binding protein BAB2_1146</fullName>
    </recommendedName>
</protein>
<sequence>MKRRTFLAMSLALTFLPSVALADNIPVRVGYIADYWGTSITAIASEKGLWEKHGLDADTRVFTNGPIQVQALGAGSLDFGYIGPGALWLPASGKAKIVAINSVGFSDRVIAQEGFKSMADLKGKKIGVPEGTSGDMLLRLALGKAGMKLDDVQVIKMDPSTVVSAFASKQIDAAGIWYPLIGTIKEHVPGMVELAANSDFFPDKTFPSAFIARNEIVAENPEAVKRMIAVIEEAEDFRTANPEQSVDITAKFLKVDKANLETEAKNGKSLTSEELVKLTRDGSVNGWLSGMADMFVTFGKLKSPLDPKDYYLADYFTAK</sequence>
<evidence type="ECO:0000255" key="1"/>
<evidence type="ECO:0000305" key="2"/>
<accession>Q2YJB6</accession>
<gene>
    <name type="ordered locus">BAB2_1146</name>
</gene>
<dbReference type="EMBL" id="AM040265">
    <property type="protein sequence ID" value="CAJ13312.1"/>
    <property type="molecule type" value="Genomic_DNA"/>
</dbReference>
<dbReference type="RefSeq" id="WP_002967147.1">
    <property type="nucleotide sequence ID" value="NZ_KN046823.1"/>
</dbReference>
<dbReference type="SMR" id="Q2YJB6"/>
<dbReference type="STRING" id="359391.BAB2_1146"/>
<dbReference type="KEGG" id="bmf:BAB2_1146"/>
<dbReference type="PATRIC" id="fig|359391.11.peg.1932"/>
<dbReference type="HOGENOM" id="CLU_028871_3_0_5"/>
<dbReference type="PhylomeDB" id="Q2YJB6"/>
<dbReference type="Proteomes" id="UP000002719">
    <property type="component" value="Chromosome II"/>
</dbReference>
<dbReference type="GO" id="GO:0016020">
    <property type="term" value="C:membrane"/>
    <property type="evidence" value="ECO:0007669"/>
    <property type="project" value="InterPro"/>
</dbReference>
<dbReference type="GO" id="GO:0042597">
    <property type="term" value="C:periplasmic space"/>
    <property type="evidence" value="ECO:0007669"/>
    <property type="project" value="UniProtKB-SubCell"/>
</dbReference>
<dbReference type="GO" id="GO:0042626">
    <property type="term" value="F:ATPase-coupled transmembrane transporter activity"/>
    <property type="evidence" value="ECO:0007669"/>
    <property type="project" value="InterPro"/>
</dbReference>
<dbReference type="CDD" id="cd13561">
    <property type="entry name" value="PBP2_SsuA_like_4"/>
    <property type="match status" value="1"/>
</dbReference>
<dbReference type="Gene3D" id="3.40.190.10">
    <property type="entry name" value="Periplasmic binding protein-like II"/>
    <property type="match status" value="3"/>
</dbReference>
<dbReference type="InterPro" id="IPR010067">
    <property type="entry name" value="ABC_SsuA_sub-bd"/>
</dbReference>
<dbReference type="InterPro" id="IPR001638">
    <property type="entry name" value="Solute-binding_3/MltF_N"/>
</dbReference>
<dbReference type="InterPro" id="IPR015168">
    <property type="entry name" value="SsuA/THI5"/>
</dbReference>
<dbReference type="NCBIfam" id="TIGR01728">
    <property type="entry name" value="SsuA_fam"/>
    <property type="match status" value="1"/>
</dbReference>
<dbReference type="PANTHER" id="PTHR30024">
    <property type="entry name" value="ALIPHATIC SULFONATES-BINDING PROTEIN-RELATED"/>
    <property type="match status" value="1"/>
</dbReference>
<dbReference type="PANTHER" id="PTHR30024:SF47">
    <property type="entry name" value="TAURINE-BINDING PERIPLASMIC PROTEIN"/>
    <property type="match status" value="1"/>
</dbReference>
<dbReference type="Pfam" id="PF09084">
    <property type="entry name" value="NMT1"/>
    <property type="match status" value="1"/>
</dbReference>
<dbReference type="SMART" id="SM00062">
    <property type="entry name" value="PBPb"/>
    <property type="match status" value="1"/>
</dbReference>
<dbReference type="SUPFAM" id="SSF53850">
    <property type="entry name" value="Periplasmic binding protein-like II"/>
    <property type="match status" value="1"/>
</dbReference>
<comment type="function">
    <text>Probably part of an ABC transporter complex.</text>
</comment>
<comment type="subunit">
    <text evidence="2">The complex is composed of two ATP-binding proteins (BAB2_1147), two transmembrane proteins (BAB2_1148) and a solute-binding protein (BAB2_1146).</text>
</comment>
<comment type="subcellular location">
    <subcellularLocation>
        <location evidence="2">Periplasm</location>
    </subcellularLocation>
</comment>
<comment type="similarity">
    <text evidence="2">Belongs to the bacterial solute-binding protein SsuA/TauA family.</text>
</comment>
<name>Y3646_BRUA2</name>
<organism>
    <name type="scientific">Brucella abortus (strain 2308)</name>
    <dbReference type="NCBI Taxonomy" id="359391"/>
    <lineage>
        <taxon>Bacteria</taxon>
        <taxon>Pseudomonadati</taxon>
        <taxon>Pseudomonadota</taxon>
        <taxon>Alphaproteobacteria</taxon>
        <taxon>Hyphomicrobiales</taxon>
        <taxon>Brucellaceae</taxon>
        <taxon>Brucella/Ochrobactrum group</taxon>
        <taxon>Brucella</taxon>
    </lineage>
</organism>
<proteinExistence type="inferred from homology"/>
<keyword id="KW-0574">Periplasm</keyword>
<keyword id="KW-1185">Reference proteome</keyword>
<keyword id="KW-0732">Signal</keyword>
<keyword id="KW-0813">Transport</keyword>
<reference key="1">
    <citation type="journal article" date="2005" name="Infect. Immun.">
        <title>Whole-genome analyses of speciation events in pathogenic Brucellae.</title>
        <authorList>
            <person name="Chain P.S."/>
            <person name="Comerci D.J."/>
            <person name="Tolmasky M.E."/>
            <person name="Larimer F.W."/>
            <person name="Malfatti S.A."/>
            <person name="Vergez L.M."/>
            <person name="Aguero F."/>
            <person name="Land M.L."/>
            <person name="Ugalde R.A."/>
            <person name="Garcia E."/>
        </authorList>
    </citation>
    <scope>NUCLEOTIDE SEQUENCE [LARGE SCALE GENOMIC DNA]</scope>
    <source>
        <strain>2308</strain>
    </source>
</reference>